<dbReference type="EC" id="2.1.1.-" evidence="2"/>
<dbReference type="EMBL" id="AE014298">
    <property type="protein sequence ID" value="AAF45956.2"/>
    <property type="molecule type" value="Genomic_DNA"/>
</dbReference>
<dbReference type="RefSeq" id="NP_572170.1">
    <property type="nucleotide sequence ID" value="NM_131942.3"/>
</dbReference>
<dbReference type="SMR" id="Q9W4J5"/>
<dbReference type="BioGRID" id="57904">
    <property type="interactions" value="2"/>
</dbReference>
<dbReference type="DIP" id="DIP-23557N"/>
<dbReference type="FunCoup" id="Q9W4J5">
    <property type="interactions" value="1491"/>
</dbReference>
<dbReference type="STRING" id="7227.FBpp0070646"/>
<dbReference type="PaxDb" id="7227-FBpp0070646"/>
<dbReference type="DNASU" id="31387"/>
<dbReference type="EnsemblMetazoa" id="FBtr0070678">
    <property type="protein sequence ID" value="FBpp0070646"/>
    <property type="gene ID" value="FBgn0029714"/>
</dbReference>
<dbReference type="GeneID" id="31387"/>
<dbReference type="KEGG" id="dme:Dmel_CG3527"/>
<dbReference type="UCSC" id="CG3527-RA">
    <property type="organism name" value="d. melanogaster"/>
</dbReference>
<dbReference type="AGR" id="FB:FBgn0029714"/>
<dbReference type="FlyBase" id="FBgn0029714">
    <property type="gene designation" value="CG3527"/>
</dbReference>
<dbReference type="VEuPathDB" id="VectorBase:FBgn0029714"/>
<dbReference type="eggNOG" id="KOG3073">
    <property type="taxonomic scope" value="Eukaryota"/>
</dbReference>
<dbReference type="GeneTree" id="ENSGT00390000000305"/>
<dbReference type="HOGENOM" id="CLU_055846_1_1_1"/>
<dbReference type="InParanoid" id="Q9W4J5"/>
<dbReference type="OMA" id="VHNTFEL"/>
<dbReference type="OrthoDB" id="269804at2759"/>
<dbReference type="PhylomeDB" id="Q9W4J5"/>
<dbReference type="Reactome" id="R-DME-6791226">
    <property type="pathway name" value="Major pathway of rRNA processing in the nucleolus and cytosol"/>
</dbReference>
<dbReference type="BioGRID-ORCS" id="31387">
    <property type="hits" value="1 hit in 1 CRISPR screen"/>
</dbReference>
<dbReference type="GenomeRNAi" id="31387"/>
<dbReference type="PRO" id="PR:Q9W4J5"/>
<dbReference type="Proteomes" id="UP000000803">
    <property type="component" value="Chromosome X"/>
</dbReference>
<dbReference type="Bgee" id="FBgn0029714">
    <property type="expression patterns" value="Expressed in adult enteroendocrine precursor cell in adult midgut (Drosophila) and 72 other cell types or tissues"/>
</dbReference>
<dbReference type="ExpressionAtlas" id="Q9W4J5">
    <property type="expression patterns" value="baseline and differential"/>
</dbReference>
<dbReference type="GO" id="GO:0005730">
    <property type="term" value="C:nucleolus"/>
    <property type="evidence" value="ECO:0007669"/>
    <property type="project" value="UniProtKB-SubCell"/>
</dbReference>
<dbReference type="GO" id="GO:0005634">
    <property type="term" value="C:nucleus"/>
    <property type="evidence" value="ECO:0000318"/>
    <property type="project" value="GO_Central"/>
</dbReference>
<dbReference type="GO" id="GO:0032040">
    <property type="term" value="C:small-subunit processome"/>
    <property type="evidence" value="ECO:0000250"/>
    <property type="project" value="UniProtKB"/>
</dbReference>
<dbReference type="GO" id="GO:0070037">
    <property type="term" value="F:rRNA (pseudouridine) methyltransferase activity"/>
    <property type="evidence" value="ECO:0000250"/>
    <property type="project" value="UniProtKB"/>
</dbReference>
<dbReference type="GO" id="GO:0019843">
    <property type="term" value="F:rRNA binding"/>
    <property type="evidence" value="ECO:0000318"/>
    <property type="project" value="GO_Central"/>
</dbReference>
<dbReference type="GO" id="GO:0042742">
    <property type="term" value="P:defense response to bacterium"/>
    <property type="evidence" value="ECO:0000315"/>
    <property type="project" value="FlyBase"/>
</dbReference>
<dbReference type="GO" id="GO:0042274">
    <property type="term" value="P:ribosomal small subunit biogenesis"/>
    <property type="evidence" value="ECO:0000250"/>
    <property type="project" value="UniProtKB"/>
</dbReference>
<dbReference type="GO" id="GO:0070475">
    <property type="term" value="P:rRNA base methylation"/>
    <property type="evidence" value="ECO:0000318"/>
    <property type="project" value="GO_Central"/>
</dbReference>
<dbReference type="GO" id="GO:0031167">
    <property type="term" value="P:rRNA methylation"/>
    <property type="evidence" value="ECO:0000250"/>
    <property type="project" value="FlyBase"/>
</dbReference>
<dbReference type="CDD" id="cd18088">
    <property type="entry name" value="Nep1-like"/>
    <property type="match status" value="1"/>
</dbReference>
<dbReference type="FunFam" id="3.40.1280.10:FF:000003">
    <property type="entry name" value="Ribosomal RNA small subunit methyltransferase"/>
    <property type="match status" value="1"/>
</dbReference>
<dbReference type="Gene3D" id="3.40.1280.10">
    <property type="match status" value="1"/>
</dbReference>
<dbReference type="InterPro" id="IPR029028">
    <property type="entry name" value="Alpha/beta_knot_MTases"/>
</dbReference>
<dbReference type="InterPro" id="IPR005304">
    <property type="entry name" value="Rbsml_bgen_MeTrfase_EMG1/NEP1"/>
</dbReference>
<dbReference type="InterPro" id="IPR029026">
    <property type="entry name" value="tRNA_m1G_MTases_N"/>
</dbReference>
<dbReference type="PANTHER" id="PTHR12636">
    <property type="entry name" value="NEP1/MRA1"/>
    <property type="match status" value="1"/>
</dbReference>
<dbReference type="PANTHER" id="PTHR12636:SF5">
    <property type="entry name" value="RIBOSOMAL RNA SMALL SUBUNIT METHYLTRANSFERASE NEP1"/>
    <property type="match status" value="1"/>
</dbReference>
<dbReference type="Pfam" id="PF03587">
    <property type="entry name" value="EMG1"/>
    <property type="match status" value="1"/>
</dbReference>
<dbReference type="SUPFAM" id="SSF75217">
    <property type="entry name" value="alpha/beta knot"/>
    <property type="match status" value="1"/>
</dbReference>
<feature type="chain" id="PRO_0000158609" description="Ribosomal RNA small subunit methyltransferase NEP1">
    <location>
        <begin position="1"/>
        <end position="252"/>
    </location>
</feature>
<feature type="binding site" evidence="1">
    <location>
        <position position="176"/>
    </location>
    <ligand>
        <name>S-adenosyl-L-methionine</name>
        <dbReference type="ChEBI" id="CHEBI:59789"/>
    </ligand>
</feature>
<feature type="binding site" evidence="1">
    <location>
        <position position="209"/>
    </location>
    <ligand>
        <name>S-adenosyl-L-methionine</name>
        <dbReference type="ChEBI" id="CHEBI:59789"/>
    </ligand>
</feature>
<feature type="binding site" evidence="1">
    <location>
        <position position="214"/>
    </location>
    <ligand>
        <name>S-adenosyl-L-methionine</name>
        <dbReference type="ChEBI" id="CHEBI:59789"/>
    </ligand>
</feature>
<feature type="binding site" evidence="1">
    <location>
        <begin position="227"/>
        <end position="232"/>
    </location>
    <ligand>
        <name>S-adenosyl-L-methionine</name>
        <dbReference type="ChEBI" id="CHEBI:59789"/>
    </ligand>
</feature>
<feature type="site" description="Interaction with substrate rRNA" evidence="1">
    <location>
        <position position="84"/>
    </location>
</feature>
<feature type="site" description="Stabilizes Arg-84" evidence="1">
    <location>
        <position position="86"/>
    </location>
</feature>
<feature type="site" description="Interaction with substrate rRNA" evidence="1">
    <location>
        <position position="125"/>
    </location>
</feature>
<feature type="site" description="Interaction with substrate rRNA" evidence="1">
    <location>
        <position position="128"/>
    </location>
</feature>
<feature type="site" description="Interaction with substrate rRNA" evidence="1">
    <location>
        <position position="132"/>
    </location>
</feature>
<organism>
    <name type="scientific">Drosophila melanogaster</name>
    <name type="common">Fruit fly</name>
    <dbReference type="NCBI Taxonomy" id="7227"/>
    <lineage>
        <taxon>Eukaryota</taxon>
        <taxon>Metazoa</taxon>
        <taxon>Ecdysozoa</taxon>
        <taxon>Arthropoda</taxon>
        <taxon>Hexapoda</taxon>
        <taxon>Insecta</taxon>
        <taxon>Pterygota</taxon>
        <taxon>Neoptera</taxon>
        <taxon>Endopterygota</taxon>
        <taxon>Diptera</taxon>
        <taxon>Brachycera</taxon>
        <taxon>Muscomorpha</taxon>
        <taxon>Ephydroidea</taxon>
        <taxon>Drosophilidae</taxon>
        <taxon>Drosophila</taxon>
        <taxon>Sophophora</taxon>
    </lineage>
</organism>
<protein>
    <recommendedName>
        <fullName evidence="2">Ribosomal RNA small subunit methyltransferase NEP1</fullName>
        <ecNumber evidence="2">2.1.1.-</ecNumber>
    </recommendedName>
    <alternativeName>
        <fullName evidence="2">18S rRNA (pseudouridine-N1)-methyltransferase</fullName>
    </alternativeName>
    <alternativeName>
        <fullName evidence="2">Ribosome biogenesis protein NEP1</fullName>
    </alternativeName>
</protein>
<name>NEP1_DROME</name>
<reference key="1">
    <citation type="journal article" date="2000" name="Science">
        <title>The genome sequence of Drosophila melanogaster.</title>
        <authorList>
            <person name="Adams M.D."/>
            <person name="Celniker S.E."/>
            <person name="Holt R.A."/>
            <person name="Evans C.A."/>
            <person name="Gocayne J.D."/>
            <person name="Amanatides P.G."/>
            <person name="Scherer S.E."/>
            <person name="Li P.W."/>
            <person name="Hoskins R.A."/>
            <person name="Galle R.F."/>
            <person name="George R.A."/>
            <person name="Lewis S.E."/>
            <person name="Richards S."/>
            <person name="Ashburner M."/>
            <person name="Henderson S.N."/>
            <person name="Sutton G.G."/>
            <person name="Wortman J.R."/>
            <person name="Yandell M.D."/>
            <person name="Zhang Q."/>
            <person name="Chen L.X."/>
            <person name="Brandon R.C."/>
            <person name="Rogers Y.-H.C."/>
            <person name="Blazej R.G."/>
            <person name="Champe M."/>
            <person name="Pfeiffer B.D."/>
            <person name="Wan K.H."/>
            <person name="Doyle C."/>
            <person name="Baxter E.G."/>
            <person name="Helt G."/>
            <person name="Nelson C.R."/>
            <person name="Miklos G.L.G."/>
            <person name="Abril J.F."/>
            <person name="Agbayani A."/>
            <person name="An H.-J."/>
            <person name="Andrews-Pfannkoch C."/>
            <person name="Baldwin D."/>
            <person name="Ballew R.M."/>
            <person name="Basu A."/>
            <person name="Baxendale J."/>
            <person name="Bayraktaroglu L."/>
            <person name="Beasley E.M."/>
            <person name="Beeson K.Y."/>
            <person name="Benos P.V."/>
            <person name="Berman B.P."/>
            <person name="Bhandari D."/>
            <person name="Bolshakov S."/>
            <person name="Borkova D."/>
            <person name="Botchan M.R."/>
            <person name="Bouck J."/>
            <person name="Brokstein P."/>
            <person name="Brottier P."/>
            <person name="Burtis K.C."/>
            <person name="Busam D.A."/>
            <person name="Butler H."/>
            <person name="Cadieu E."/>
            <person name="Center A."/>
            <person name="Chandra I."/>
            <person name="Cherry J.M."/>
            <person name="Cawley S."/>
            <person name="Dahlke C."/>
            <person name="Davenport L.B."/>
            <person name="Davies P."/>
            <person name="de Pablos B."/>
            <person name="Delcher A."/>
            <person name="Deng Z."/>
            <person name="Mays A.D."/>
            <person name="Dew I."/>
            <person name="Dietz S.M."/>
            <person name="Dodson K."/>
            <person name="Doup L.E."/>
            <person name="Downes M."/>
            <person name="Dugan-Rocha S."/>
            <person name="Dunkov B.C."/>
            <person name="Dunn P."/>
            <person name="Durbin K.J."/>
            <person name="Evangelista C.C."/>
            <person name="Ferraz C."/>
            <person name="Ferriera S."/>
            <person name="Fleischmann W."/>
            <person name="Fosler C."/>
            <person name="Gabrielian A.E."/>
            <person name="Garg N.S."/>
            <person name="Gelbart W.M."/>
            <person name="Glasser K."/>
            <person name="Glodek A."/>
            <person name="Gong F."/>
            <person name="Gorrell J.H."/>
            <person name="Gu Z."/>
            <person name="Guan P."/>
            <person name="Harris M."/>
            <person name="Harris N.L."/>
            <person name="Harvey D.A."/>
            <person name="Heiman T.J."/>
            <person name="Hernandez J.R."/>
            <person name="Houck J."/>
            <person name="Hostin D."/>
            <person name="Houston K.A."/>
            <person name="Howland T.J."/>
            <person name="Wei M.-H."/>
            <person name="Ibegwam C."/>
            <person name="Jalali M."/>
            <person name="Kalush F."/>
            <person name="Karpen G.H."/>
            <person name="Ke Z."/>
            <person name="Kennison J.A."/>
            <person name="Ketchum K.A."/>
            <person name="Kimmel B.E."/>
            <person name="Kodira C.D."/>
            <person name="Kraft C.L."/>
            <person name="Kravitz S."/>
            <person name="Kulp D."/>
            <person name="Lai Z."/>
            <person name="Lasko P."/>
            <person name="Lei Y."/>
            <person name="Levitsky A.A."/>
            <person name="Li J.H."/>
            <person name="Li Z."/>
            <person name="Liang Y."/>
            <person name="Lin X."/>
            <person name="Liu X."/>
            <person name="Mattei B."/>
            <person name="McIntosh T.C."/>
            <person name="McLeod M.P."/>
            <person name="McPherson D."/>
            <person name="Merkulov G."/>
            <person name="Milshina N.V."/>
            <person name="Mobarry C."/>
            <person name="Morris J."/>
            <person name="Moshrefi A."/>
            <person name="Mount S.M."/>
            <person name="Moy M."/>
            <person name="Murphy B."/>
            <person name="Murphy L."/>
            <person name="Muzny D.M."/>
            <person name="Nelson D.L."/>
            <person name="Nelson D.R."/>
            <person name="Nelson K.A."/>
            <person name="Nixon K."/>
            <person name="Nusskern D.R."/>
            <person name="Pacleb J.M."/>
            <person name="Palazzolo M."/>
            <person name="Pittman G.S."/>
            <person name="Pan S."/>
            <person name="Pollard J."/>
            <person name="Puri V."/>
            <person name="Reese M.G."/>
            <person name="Reinert K."/>
            <person name="Remington K."/>
            <person name="Saunders R.D.C."/>
            <person name="Scheeler F."/>
            <person name="Shen H."/>
            <person name="Shue B.C."/>
            <person name="Siden-Kiamos I."/>
            <person name="Simpson M."/>
            <person name="Skupski M.P."/>
            <person name="Smith T.J."/>
            <person name="Spier E."/>
            <person name="Spradling A.C."/>
            <person name="Stapleton M."/>
            <person name="Strong R."/>
            <person name="Sun E."/>
            <person name="Svirskas R."/>
            <person name="Tector C."/>
            <person name="Turner R."/>
            <person name="Venter E."/>
            <person name="Wang A.H."/>
            <person name="Wang X."/>
            <person name="Wang Z.-Y."/>
            <person name="Wassarman D.A."/>
            <person name="Weinstock G.M."/>
            <person name="Weissenbach J."/>
            <person name="Williams S.M."/>
            <person name="Woodage T."/>
            <person name="Worley K.C."/>
            <person name="Wu D."/>
            <person name="Yang S."/>
            <person name="Yao Q.A."/>
            <person name="Ye J."/>
            <person name="Yeh R.-F."/>
            <person name="Zaveri J.S."/>
            <person name="Zhan M."/>
            <person name="Zhang G."/>
            <person name="Zhao Q."/>
            <person name="Zheng L."/>
            <person name="Zheng X.H."/>
            <person name="Zhong F.N."/>
            <person name="Zhong W."/>
            <person name="Zhou X."/>
            <person name="Zhu S.C."/>
            <person name="Zhu X."/>
            <person name="Smith H.O."/>
            <person name="Gibbs R.A."/>
            <person name="Myers E.W."/>
            <person name="Rubin G.M."/>
            <person name="Venter J.C."/>
        </authorList>
    </citation>
    <scope>NUCLEOTIDE SEQUENCE [LARGE SCALE GENOMIC DNA]</scope>
    <source>
        <strain>Berkeley</strain>
    </source>
</reference>
<reference key="2">
    <citation type="journal article" date="2002" name="Genome Biol.">
        <title>Annotation of the Drosophila melanogaster euchromatic genome: a systematic review.</title>
        <authorList>
            <person name="Misra S."/>
            <person name="Crosby M.A."/>
            <person name="Mungall C.J."/>
            <person name="Matthews B.B."/>
            <person name="Campbell K.S."/>
            <person name="Hradecky P."/>
            <person name="Huang Y."/>
            <person name="Kaminker J.S."/>
            <person name="Millburn G.H."/>
            <person name="Prochnik S.E."/>
            <person name="Smith C.D."/>
            <person name="Tupy J.L."/>
            <person name="Whitfield E.J."/>
            <person name="Bayraktaroglu L."/>
            <person name="Berman B.P."/>
            <person name="Bettencourt B.R."/>
            <person name="Celniker S.E."/>
            <person name="de Grey A.D.N.J."/>
            <person name="Drysdale R.A."/>
            <person name="Harris N.L."/>
            <person name="Richter J."/>
            <person name="Russo S."/>
            <person name="Schroeder A.J."/>
            <person name="Shu S.Q."/>
            <person name="Stapleton M."/>
            <person name="Yamada C."/>
            <person name="Ashburner M."/>
            <person name="Gelbart W.M."/>
            <person name="Rubin G.M."/>
            <person name="Lewis S.E."/>
        </authorList>
    </citation>
    <scope>GENOME REANNOTATION</scope>
    <source>
        <strain>Berkeley</strain>
    </source>
</reference>
<accession>Q9W4J5</accession>
<sequence>MGGQGKAINRKRKFVGRKADDPEFDLDKKQFKVLHLNATEKRLIIVLEGAQLETVKVHNTFELLNCDDHAGIMRKNQRDPGSCRPDITHQCLLMLFDSPLNRAGLLQVFVRTEHNVLIEINPQTRIPRTFKRFAGLMVQLLHKFQIRANDSSRRLMSVIKNPITDHVPVGCKKYAMSFSGKLLPNCRDLVPHGDETSASYDEPVVIVIGAFAHGVLKTDYTEELFSISNYPLSAAIACSKICSAFEEVWGVV</sequence>
<comment type="function">
    <text evidence="1 2">S-adenosyl-L-methionine-dependent pseudouridine N(1)-methyltransferase that methylates a pseudouridine in 18S rRNA. Involved the biosynthesis of the hypermodified N1-methyl-N3-(3-amino-3-carboxypropyl) pseudouridine (m1acp3-Psi) conserved in eukaryotic 18S rRNA. Also has an essential role in 40S ribosomal subunit biogenesis independent on its methyltransferase activity, facilitating the incorporation of ribosomal protein S19 during the formation of pre-ribosomes.</text>
</comment>
<comment type="function">
    <text evidence="1 2">S-adenosyl-L-methionine-dependent pseudouridine N(1)-methyltransferase that methylates pseudouridine at position in 18S rRNA. Involved the biosynthesis of the hypermodified N1-methyl-N3-(3-amino-3-carboxypropyl) pseudouridine (m1acp3-Psi) conserved in eukaryotic 18S rRNA. Is not able to methylate uridine at this position (By similarity). Also has an essential role in 40S ribosomal subunit biogenesis independent on its methyltransferase activity, facilitating the incorporation of ribosomal protein S19 during the formation of pre-ribosomes (By similarity). Part of the small subunit (SSU) processome, first precursor of the small eukaryotic ribosomal subunit. During the assembly of the SSU processome in the nucleolus, many ribosome biogenesis factors, an RNA chaperone and ribosomal proteins associate with the nascent pre-rRNA and work in concert to generate RNA folding, modifications, rearrangements and cleavage as well as targeted degradation of pre-ribosomal RNA by the RNA exosome (By similarity).</text>
</comment>
<comment type="catalytic activity">
    <reaction evidence="2">
        <text>a pseudouridine in rRNA + S-adenosyl-L-methionine = an N(1)-methylpseudouridine in rRNA + S-adenosyl-L-homocysteine + H(+)</text>
        <dbReference type="Rhea" id="RHEA:46696"/>
        <dbReference type="Rhea" id="RHEA-COMP:11634"/>
        <dbReference type="Rhea" id="RHEA-COMP:13933"/>
        <dbReference type="ChEBI" id="CHEBI:15378"/>
        <dbReference type="ChEBI" id="CHEBI:57856"/>
        <dbReference type="ChEBI" id="CHEBI:59789"/>
        <dbReference type="ChEBI" id="CHEBI:65314"/>
        <dbReference type="ChEBI" id="CHEBI:74890"/>
    </reaction>
</comment>
<comment type="subunit">
    <text evidence="1 2">Homodimer. Part of the small subunit (SSU) processome, composed of more than 70 proteins and the RNA chaperone small nucleolar RNA (snoRNA) U3.</text>
</comment>
<comment type="subcellular location">
    <subcellularLocation>
        <location evidence="2">Nucleus</location>
        <location evidence="2">Nucleolus</location>
    </subcellularLocation>
</comment>
<comment type="similarity">
    <text evidence="3">Belongs to the class IV-like SAM-binding methyltransferase superfamily. RNA methyltransferase NEP1 family.</text>
</comment>
<evidence type="ECO:0000250" key="1">
    <source>
        <dbReference type="UniProtKB" id="Q06287"/>
    </source>
</evidence>
<evidence type="ECO:0000250" key="2">
    <source>
        <dbReference type="UniProtKB" id="Q92979"/>
    </source>
</evidence>
<evidence type="ECO:0000305" key="3"/>
<proteinExistence type="inferred from homology"/>
<gene>
    <name type="ORF">CG3527</name>
</gene>
<keyword id="KW-0489">Methyltransferase</keyword>
<keyword id="KW-0539">Nucleus</keyword>
<keyword id="KW-1185">Reference proteome</keyword>
<keyword id="KW-0690">Ribosome biogenesis</keyword>
<keyword id="KW-0694">RNA-binding</keyword>
<keyword id="KW-0698">rRNA processing</keyword>
<keyword id="KW-0699">rRNA-binding</keyword>
<keyword id="KW-0949">S-adenosyl-L-methionine</keyword>
<keyword id="KW-0808">Transferase</keyword>